<geneLocation type="plasmid">
    <name>megaplasmid Rsp</name>
</geneLocation>
<name>T23O2_RALN1</name>
<organism>
    <name type="scientific">Ralstonia nicotianae (strain ATCC BAA-1114 / GMI1000)</name>
    <name type="common">Ralstonia solanacearum</name>
    <dbReference type="NCBI Taxonomy" id="267608"/>
    <lineage>
        <taxon>Bacteria</taxon>
        <taxon>Pseudomonadati</taxon>
        <taxon>Pseudomonadota</taxon>
        <taxon>Betaproteobacteria</taxon>
        <taxon>Burkholderiales</taxon>
        <taxon>Burkholderiaceae</taxon>
        <taxon>Ralstonia</taxon>
        <taxon>Ralstonia solanacearum species complex</taxon>
    </lineage>
</organism>
<keyword id="KW-0223">Dioxygenase</keyword>
<keyword id="KW-0349">Heme</keyword>
<keyword id="KW-0408">Iron</keyword>
<keyword id="KW-0479">Metal-binding</keyword>
<keyword id="KW-0560">Oxidoreductase</keyword>
<keyword id="KW-0614">Plasmid</keyword>
<keyword id="KW-1185">Reference proteome</keyword>
<keyword id="KW-0823">Tryptophan catabolism</keyword>
<protein>
    <recommendedName>
        <fullName evidence="1">Tryptophan 2,3-dioxygenase 2</fullName>
        <shortName evidence="1">TDO-2</shortName>
        <ecNumber evidence="1">1.13.11.11</ecNumber>
    </recommendedName>
    <alternativeName>
        <fullName evidence="1">Tryptamin 2,3-dioxygenase 2</fullName>
    </alternativeName>
    <alternativeName>
        <fullName evidence="1">Tryptophan oxygenase 2</fullName>
        <shortName evidence="1">TO-2</shortName>
        <shortName evidence="1">TRPO-2</shortName>
    </alternativeName>
    <alternativeName>
        <fullName evidence="1">Tryptophan pyrrolase 2</fullName>
    </alternativeName>
    <alternativeName>
        <fullName evidence="1">Tryptophanase 2</fullName>
    </alternativeName>
</protein>
<evidence type="ECO:0000255" key="1">
    <source>
        <dbReference type="HAMAP-Rule" id="MF_01972"/>
    </source>
</evidence>
<proteinExistence type="inferred from homology"/>
<reference key="1">
    <citation type="journal article" date="2002" name="Nature">
        <title>Genome sequence of the plant pathogen Ralstonia solanacearum.</title>
        <authorList>
            <person name="Salanoubat M."/>
            <person name="Genin S."/>
            <person name="Artiguenave F."/>
            <person name="Gouzy J."/>
            <person name="Mangenot S."/>
            <person name="Arlat M."/>
            <person name="Billault A."/>
            <person name="Brottier P."/>
            <person name="Camus J.-C."/>
            <person name="Cattolico L."/>
            <person name="Chandler M."/>
            <person name="Choisne N."/>
            <person name="Claudel-Renard C."/>
            <person name="Cunnac S."/>
            <person name="Demange N."/>
            <person name="Gaspin C."/>
            <person name="Lavie M."/>
            <person name="Moisan A."/>
            <person name="Robert C."/>
            <person name="Saurin W."/>
            <person name="Schiex T."/>
            <person name="Siguier P."/>
            <person name="Thebault P."/>
            <person name="Whalen M."/>
            <person name="Wincker P."/>
            <person name="Levy M."/>
            <person name="Weissenbach J."/>
            <person name="Boucher C.A."/>
        </authorList>
    </citation>
    <scope>NUCLEOTIDE SEQUENCE [LARGE SCALE GENOMIC DNA]</scope>
    <source>
        <strain>ATCC BAA-1114 / GMI1000</strain>
    </source>
</reference>
<gene>
    <name evidence="1" type="primary">kynA2</name>
    <name type="ordered locus">RSp0694</name>
</gene>
<accession>Q8XRY7</accession>
<sequence length="369" mass="42166">MKPMSYWDYIKVEELLALQGGANGDETQVGNDEALFIVVHQVYELWFKLILRELTFARDLLRQDTVPGHQIALGVRSLRRAIAVFEQANQHFRVMETMTARDFLDFRERLMPASGFQSAQLREIEILLGLEDNERIAVCQGGSFKDALKLPNGALSSAAYRVEAREAHGQSLKHCLYAWLSRIPIDGSNEPAAVKRFLRDYIGSVRAESQRRLQTAIDRQLAPAEVERLRARYQADDVGAETFLLAEEDPQADAMTREKRRAVRAAMLFVESYRELPQLAWPRELLESILELEQSMLIWRQRHARMVERIIGRRVGTGGSSGVDYLDQTALRYRVFTDLWTVRSLLLRKSSVPPIRQGASYAFAEEALV</sequence>
<feature type="chain" id="PRO_0000360130" description="Tryptophan 2,3-dioxygenase 2">
    <location>
        <begin position="1"/>
        <end position="369"/>
    </location>
</feature>
<feature type="binding site" evidence="1">
    <location>
        <begin position="36"/>
        <end position="40"/>
    </location>
    <ligand>
        <name>substrate</name>
    </ligand>
</feature>
<feature type="binding site" evidence="1">
    <location>
        <position position="107"/>
    </location>
    <ligand>
        <name>substrate</name>
    </ligand>
</feature>
<feature type="binding site" description="axial binding residue" evidence="1">
    <location>
        <position position="303"/>
    </location>
    <ligand>
        <name>heme</name>
        <dbReference type="ChEBI" id="CHEBI:30413"/>
    </ligand>
    <ligandPart>
        <name>Fe</name>
        <dbReference type="ChEBI" id="CHEBI:18248"/>
    </ligandPart>
</feature>
<feature type="binding site" evidence="1">
    <location>
        <position position="317"/>
    </location>
    <ligand>
        <name>substrate</name>
    </ligand>
</feature>
<dbReference type="EC" id="1.13.11.11" evidence="1"/>
<dbReference type="EMBL" id="AL646053">
    <property type="protein sequence ID" value="CAD17845.1"/>
    <property type="molecule type" value="Genomic_DNA"/>
</dbReference>
<dbReference type="RefSeq" id="WP_011003992.1">
    <property type="nucleotide sequence ID" value="NC_003296.1"/>
</dbReference>
<dbReference type="SMR" id="Q8XRY7"/>
<dbReference type="STRING" id="267608.RSp0694"/>
<dbReference type="EnsemblBacteria" id="CAD17845">
    <property type="protein sequence ID" value="CAD17845"/>
    <property type="gene ID" value="RSp0694"/>
</dbReference>
<dbReference type="KEGG" id="rso:RSp0694"/>
<dbReference type="PATRIC" id="fig|267608.8.peg.4169"/>
<dbReference type="eggNOG" id="COG3483">
    <property type="taxonomic scope" value="Bacteria"/>
</dbReference>
<dbReference type="HOGENOM" id="CLU_045599_1_1_4"/>
<dbReference type="UniPathway" id="UPA00333">
    <property type="reaction ID" value="UER00453"/>
</dbReference>
<dbReference type="Proteomes" id="UP000001436">
    <property type="component" value="Plasmid megaplasmid Rsp"/>
</dbReference>
<dbReference type="GO" id="GO:0020037">
    <property type="term" value="F:heme binding"/>
    <property type="evidence" value="ECO:0000250"/>
    <property type="project" value="UniProtKB"/>
</dbReference>
<dbReference type="GO" id="GO:0046872">
    <property type="term" value="F:metal ion binding"/>
    <property type="evidence" value="ECO:0007669"/>
    <property type="project" value="UniProtKB-KW"/>
</dbReference>
<dbReference type="GO" id="GO:0004833">
    <property type="term" value="F:tryptophan 2,3-dioxygenase activity"/>
    <property type="evidence" value="ECO:0000250"/>
    <property type="project" value="UniProtKB"/>
</dbReference>
<dbReference type="GO" id="GO:0019442">
    <property type="term" value="P:L-tryptophan catabolic process to acetyl-CoA"/>
    <property type="evidence" value="ECO:0007669"/>
    <property type="project" value="TreeGrafter"/>
</dbReference>
<dbReference type="GO" id="GO:0019441">
    <property type="term" value="P:L-tryptophan catabolic process to kynurenine"/>
    <property type="evidence" value="ECO:0000250"/>
    <property type="project" value="UniProtKB"/>
</dbReference>
<dbReference type="FunFam" id="1.10.287.3810:FF:000002">
    <property type="entry name" value="Tryptophan 2,3-dioxygenase"/>
    <property type="match status" value="1"/>
</dbReference>
<dbReference type="Gene3D" id="1.10.287.3810">
    <property type="match status" value="1"/>
</dbReference>
<dbReference type="Gene3D" id="1.20.58.480">
    <property type="match status" value="1"/>
</dbReference>
<dbReference type="HAMAP" id="MF_01972">
    <property type="entry name" value="T23O"/>
    <property type="match status" value="1"/>
</dbReference>
<dbReference type="InterPro" id="IPR037217">
    <property type="entry name" value="Trp/Indoleamine_2_3_dOase-like"/>
</dbReference>
<dbReference type="InterPro" id="IPR004981">
    <property type="entry name" value="Trp_2_3_dOase"/>
</dbReference>
<dbReference type="PANTHER" id="PTHR10138">
    <property type="entry name" value="TRYPTOPHAN 2,3-DIOXYGENASE"/>
    <property type="match status" value="1"/>
</dbReference>
<dbReference type="PANTHER" id="PTHR10138:SF0">
    <property type="entry name" value="TRYPTOPHAN 2,3-DIOXYGENASE"/>
    <property type="match status" value="1"/>
</dbReference>
<dbReference type="Pfam" id="PF03301">
    <property type="entry name" value="Trp_dioxygenase"/>
    <property type="match status" value="1"/>
</dbReference>
<dbReference type="SUPFAM" id="SSF140959">
    <property type="entry name" value="Indolic compounds 2,3-dioxygenase-like"/>
    <property type="match status" value="1"/>
</dbReference>
<comment type="function">
    <text evidence="1">Heme-dependent dioxygenase that catalyzes the oxidative cleavage of the L-tryptophan (L-Trp) pyrrole ring and converts L-tryptophan to N-formyl-L-kynurenine. Catalyzes the oxidative cleavage of the indole moiety.</text>
</comment>
<comment type="catalytic activity">
    <reaction evidence="1">
        <text>L-tryptophan + O2 = N-formyl-L-kynurenine</text>
        <dbReference type="Rhea" id="RHEA:24536"/>
        <dbReference type="ChEBI" id="CHEBI:15379"/>
        <dbReference type="ChEBI" id="CHEBI:57912"/>
        <dbReference type="ChEBI" id="CHEBI:58629"/>
        <dbReference type="EC" id="1.13.11.11"/>
    </reaction>
</comment>
<comment type="cofactor">
    <cofactor evidence="1">
        <name>heme</name>
        <dbReference type="ChEBI" id="CHEBI:30413"/>
    </cofactor>
    <text evidence="1">Binds 1 heme group per subunit.</text>
</comment>
<comment type="pathway">
    <text evidence="1">Amino-acid degradation; L-tryptophan degradation via kynurenine pathway; L-kynurenine from L-tryptophan: step 1/2.</text>
</comment>
<comment type="subunit">
    <text evidence="1">Homotetramer.</text>
</comment>
<comment type="similarity">
    <text evidence="1">Belongs to the tryptophan 2,3-dioxygenase family.</text>
</comment>